<keyword id="KW-0227">DNA damage</keyword>
<keyword id="KW-0233">DNA recombination</keyword>
<keyword id="KW-0234">DNA repair</keyword>
<keyword id="KW-0479">Metal-binding</keyword>
<keyword id="KW-1185">Reference proteome</keyword>
<keyword id="KW-0862">Zinc</keyword>
<keyword id="KW-0863">Zinc-finger</keyword>
<proteinExistence type="inferred from homology"/>
<organism>
    <name type="scientific">Symbiobacterium thermophilum (strain DSM 24528 / JCM 14929 / IAM 14863 / T)</name>
    <dbReference type="NCBI Taxonomy" id="292459"/>
    <lineage>
        <taxon>Bacteria</taxon>
        <taxon>Bacillati</taxon>
        <taxon>Bacillota</taxon>
        <taxon>Clostridia</taxon>
        <taxon>Eubacteriales</taxon>
        <taxon>Symbiobacteriaceae</taxon>
        <taxon>Symbiobacterium</taxon>
    </lineage>
</organism>
<sequence>MYYAEPIARLIEELTKLPGIGPKTAQRLAFHILHMEPSVVEGIARTLVEARAKVKYCSVCCNLTDQDPCQICADDGRDHSTICVVQEPRDVVAMEKTREYHGVYHVLHGALNPMEGIGIDDIRVKELVARLGDGRVQEVILCTNPNTEGETTAMYIARYIKPLGVKVTRIARGLPMGGDLEYADEVTLAKALEGRREI</sequence>
<name>RECR_SYMTH</name>
<dbReference type="EMBL" id="AP006840">
    <property type="protein sequence ID" value="BAD39000.1"/>
    <property type="molecule type" value="Genomic_DNA"/>
</dbReference>
<dbReference type="SMR" id="Q67TJ3"/>
<dbReference type="STRING" id="292459.STH15"/>
<dbReference type="KEGG" id="sth:STH15"/>
<dbReference type="eggNOG" id="COG0353">
    <property type="taxonomic scope" value="Bacteria"/>
</dbReference>
<dbReference type="HOGENOM" id="CLU_060739_1_0_9"/>
<dbReference type="OrthoDB" id="9802672at2"/>
<dbReference type="Proteomes" id="UP000000417">
    <property type="component" value="Chromosome"/>
</dbReference>
<dbReference type="GO" id="GO:0003677">
    <property type="term" value="F:DNA binding"/>
    <property type="evidence" value="ECO:0007669"/>
    <property type="project" value="UniProtKB-UniRule"/>
</dbReference>
<dbReference type="GO" id="GO:0008270">
    <property type="term" value="F:zinc ion binding"/>
    <property type="evidence" value="ECO:0007669"/>
    <property type="project" value="UniProtKB-KW"/>
</dbReference>
<dbReference type="GO" id="GO:0006310">
    <property type="term" value="P:DNA recombination"/>
    <property type="evidence" value="ECO:0007669"/>
    <property type="project" value="UniProtKB-UniRule"/>
</dbReference>
<dbReference type="GO" id="GO:0006281">
    <property type="term" value="P:DNA repair"/>
    <property type="evidence" value="ECO:0007669"/>
    <property type="project" value="UniProtKB-UniRule"/>
</dbReference>
<dbReference type="CDD" id="cd01025">
    <property type="entry name" value="TOPRIM_recR"/>
    <property type="match status" value="1"/>
</dbReference>
<dbReference type="Gene3D" id="3.30.60.80">
    <property type="match status" value="1"/>
</dbReference>
<dbReference type="Gene3D" id="3.40.1360.10">
    <property type="match status" value="1"/>
</dbReference>
<dbReference type="Gene3D" id="6.10.250.240">
    <property type="match status" value="1"/>
</dbReference>
<dbReference type="Gene3D" id="1.10.8.420">
    <property type="entry name" value="RecR Domain 1"/>
    <property type="match status" value="1"/>
</dbReference>
<dbReference type="HAMAP" id="MF_00017">
    <property type="entry name" value="RecR"/>
    <property type="match status" value="1"/>
</dbReference>
<dbReference type="InterPro" id="IPR000093">
    <property type="entry name" value="DNA_Rcmb_RecR"/>
</dbReference>
<dbReference type="InterPro" id="IPR003583">
    <property type="entry name" value="Hlx-hairpin-Hlx_DNA-bd_motif"/>
</dbReference>
<dbReference type="InterPro" id="IPR023627">
    <property type="entry name" value="Rcmb_RecR"/>
</dbReference>
<dbReference type="InterPro" id="IPR015967">
    <property type="entry name" value="Rcmb_RecR_Znf"/>
</dbReference>
<dbReference type="InterPro" id="IPR006171">
    <property type="entry name" value="TOPRIM_dom"/>
</dbReference>
<dbReference type="InterPro" id="IPR034137">
    <property type="entry name" value="TOPRIM_RecR"/>
</dbReference>
<dbReference type="NCBIfam" id="TIGR00615">
    <property type="entry name" value="recR"/>
    <property type="match status" value="1"/>
</dbReference>
<dbReference type="PANTHER" id="PTHR30446">
    <property type="entry name" value="RECOMBINATION PROTEIN RECR"/>
    <property type="match status" value="1"/>
</dbReference>
<dbReference type="PANTHER" id="PTHR30446:SF0">
    <property type="entry name" value="RECOMBINATION PROTEIN RECR"/>
    <property type="match status" value="1"/>
</dbReference>
<dbReference type="Pfam" id="PF21175">
    <property type="entry name" value="RecR_C"/>
    <property type="match status" value="1"/>
</dbReference>
<dbReference type="Pfam" id="PF21176">
    <property type="entry name" value="RecR_HhH"/>
    <property type="match status" value="1"/>
</dbReference>
<dbReference type="Pfam" id="PF02132">
    <property type="entry name" value="RecR_ZnF"/>
    <property type="match status" value="1"/>
</dbReference>
<dbReference type="Pfam" id="PF13662">
    <property type="entry name" value="Toprim_4"/>
    <property type="match status" value="1"/>
</dbReference>
<dbReference type="SMART" id="SM00278">
    <property type="entry name" value="HhH1"/>
    <property type="match status" value="1"/>
</dbReference>
<dbReference type="SMART" id="SM00493">
    <property type="entry name" value="TOPRIM"/>
    <property type="match status" value="1"/>
</dbReference>
<dbReference type="SUPFAM" id="SSF111304">
    <property type="entry name" value="Recombination protein RecR"/>
    <property type="match status" value="1"/>
</dbReference>
<dbReference type="PROSITE" id="PS01300">
    <property type="entry name" value="RECR"/>
    <property type="match status" value="1"/>
</dbReference>
<dbReference type="PROSITE" id="PS50880">
    <property type="entry name" value="TOPRIM"/>
    <property type="match status" value="1"/>
</dbReference>
<feature type="chain" id="PRO_0000190407" description="Recombination protein RecR">
    <location>
        <begin position="1"/>
        <end position="198"/>
    </location>
</feature>
<feature type="domain" description="Toprim" evidence="1">
    <location>
        <begin position="80"/>
        <end position="175"/>
    </location>
</feature>
<feature type="zinc finger region" description="C4-type" evidence="1">
    <location>
        <begin position="57"/>
        <end position="72"/>
    </location>
</feature>
<protein>
    <recommendedName>
        <fullName evidence="1">Recombination protein RecR</fullName>
    </recommendedName>
</protein>
<reference key="1">
    <citation type="journal article" date="2004" name="Nucleic Acids Res.">
        <title>Genome sequence of Symbiobacterium thermophilum, an uncultivable bacterium that depends on microbial commensalism.</title>
        <authorList>
            <person name="Ueda K."/>
            <person name="Yamashita A."/>
            <person name="Ishikawa J."/>
            <person name="Shimada M."/>
            <person name="Watsuji T."/>
            <person name="Morimura K."/>
            <person name="Ikeda H."/>
            <person name="Hattori M."/>
            <person name="Beppu T."/>
        </authorList>
    </citation>
    <scope>NUCLEOTIDE SEQUENCE [LARGE SCALE GENOMIC DNA]</scope>
    <source>
        <strain>DSM 24528 / JCM 14929 / IAM 14863 / T</strain>
    </source>
</reference>
<evidence type="ECO:0000255" key="1">
    <source>
        <dbReference type="HAMAP-Rule" id="MF_00017"/>
    </source>
</evidence>
<accession>Q67TJ3</accession>
<comment type="function">
    <text evidence="1">May play a role in DNA repair. It seems to be involved in an RecBC-independent recombinational process of DNA repair. It may act with RecF and RecO.</text>
</comment>
<comment type="similarity">
    <text evidence="1">Belongs to the RecR family.</text>
</comment>
<gene>
    <name evidence="1" type="primary">recR</name>
    <name type="ordered locus">STH15</name>
</gene>